<organism>
    <name type="scientific">Zygosaccharomyces rouxii (strain ATCC 2623 / CBS 732 / NBRC 1130 / NCYC 568 / NRRL Y-229)</name>
    <dbReference type="NCBI Taxonomy" id="559307"/>
    <lineage>
        <taxon>Eukaryota</taxon>
        <taxon>Fungi</taxon>
        <taxon>Dikarya</taxon>
        <taxon>Ascomycota</taxon>
        <taxon>Saccharomycotina</taxon>
        <taxon>Saccharomycetes</taxon>
        <taxon>Saccharomycetales</taxon>
        <taxon>Saccharomycetaceae</taxon>
        <taxon>Zygosaccharomyces</taxon>
    </lineage>
</organism>
<protein>
    <recommendedName>
        <fullName>Increased recombination centers protein 19</fullName>
    </recommendedName>
</protein>
<accession>C5DZE1</accession>
<reference key="1">
    <citation type="journal article" date="2009" name="Genome Res.">
        <title>Comparative genomics of protoploid Saccharomycetaceae.</title>
        <authorList>
            <consortium name="The Genolevures Consortium"/>
            <person name="Souciet J.-L."/>
            <person name="Dujon B."/>
            <person name="Gaillardin C."/>
            <person name="Johnston M."/>
            <person name="Baret P.V."/>
            <person name="Cliften P."/>
            <person name="Sherman D.J."/>
            <person name="Weissenbach J."/>
            <person name="Westhof E."/>
            <person name="Wincker P."/>
            <person name="Jubin C."/>
            <person name="Poulain J."/>
            <person name="Barbe V."/>
            <person name="Segurens B."/>
            <person name="Artiguenave F."/>
            <person name="Anthouard V."/>
            <person name="Vacherie B."/>
            <person name="Val M.-E."/>
            <person name="Fulton R.S."/>
            <person name="Minx P."/>
            <person name="Wilson R."/>
            <person name="Durrens P."/>
            <person name="Jean G."/>
            <person name="Marck C."/>
            <person name="Martin T."/>
            <person name="Nikolski M."/>
            <person name="Rolland T."/>
            <person name="Seret M.-L."/>
            <person name="Casaregola S."/>
            <person name="Despons L."/>
            <person name="Fairhead C."/>
            <person name="Fischer G."/>
            <person name="Lafontaine I."/>
            <person name="Leh V."/>
            <person name="Lemaire M."/>
            <person name="de Montigny J."/>
            <person name="Neuveglise C."/>
            <person name="Thierry A."/>
            <person name="Blanc-Lenfle I."/>
            <person name="Bleykasten C."/>
            <person name="Diffels J."/>
            <person name="Fritsch E."/>
            <person name="Frangeul L."/>
            <person name="Goeffon A."/>
            <person name="Jauniaux N."/>
            <person name="Kachouri-Lafond R."/>
            <person name="Payen C."/>
            <person name="Potier S."/>
            <person name="Pribylova L."/>
            <person name="Ozanne C."/>
            <person name="Richard G.-F."/>
            <person name="Sacerdot C."/>
            <person name="Straub M.-L."/>
            <person name="Talla E."/>
        </authorList>
    </citation>
    <scope>NUCLEOTIDE SEQUENCE [LARGE SCALE GENOMIC DNA]</scope>
    <source>
        <strain>ATCC 2623 / CBS 732 / BCRC 21506 / NBRC 1130 / NCYC 568 / NRRL Y-229</strain>
    </source>
</reference>
<keyword id="KW-1185">Reference proteome</keyword>
<keyword id="KW-0749">Sporulation</keyword>
<dbReference type="EMBL" id="CU928179">
    <property type="protein sequence ID" value="CAR29225.1"/>
    <property type="molecule type" value="Genomic_DNA"/>
</dbReference>
<dbReference type="RefSeq" id="XP_002498158.1">
    <property type="nucleotide sequence ID" value="XM_002498113.1"/>
</dbReference>
<dbReference type="SMR" id="C5DZE1"/>
<dbReference type="FunCoup" id="C5DZE1">
    <property type="interactions" value="32"/>
</dbReference>
<dbReference type="GeneID" id="8205948"/>
<dbReference type="KEGG" id="zro:ZYRO0G03608g"/>
<dbReference type="HOGENOM" id="CLU_106818_0_0_1"/>
<dbReference type="InParanoid" id="C5DZE1"/>
<dbReference type="Proteomes" id="UP000008536">
    <property type="component" value="Chromosome G"/>
</dbReference>
<dbReference type="GO" id="GO:0030435">
    <property type="term" value="P:sporulation resulting in formation of a cellular spore"/>
    <property type="evidence" value="ECO:0007669"/>
    <property type="project" value="UniProtKB-KW"/>
</dbReference>
<proteinExistence type="inferred from homology"/>
<comment type="function">
    <text evidence="1">Involved in sporulation and maintenance of the mitochondrial DNA. Is probably involved in a pathway contributing to genomic integrity (By similarity).</text>
</comment>
<comment type="similarity">
    <text evidence="2">Belongs to the IRC19 family.</text>
</comment>
<evidence type="ECO:0000250" key="1"/>
<evidence type="ECO:0000305" key="2"/>
<feature type="chain" id="PRO_0000399068" description="Increased recombination centers protein 19">
    <location>
        <begin position="1"/>
        <end position="202"/>
    </location>
</feature>
<gene>
    <name type="primary">IRC19</name>
    <name type="synonym">RRG4</name>
    <name type="ordered locus">ZYRO0G03608g</name>
</gene>
<sequence length="202" mass="23927">MAGRTILTRNAVINSTHTLIKCPEKYLLPSLEVSNLPSFVRMAYRRLFRLQSFISNRKMVRDTYGEYLRYKFKKENYDTKRSIVVGDTPKAPLREEIRNSVMFVVKAVSHLPETKDSKFAIARDNTTCRQVLKNLLTIEYEKQSLIARYRPPTKRRDMVGPYQIYRKDFTHMQELNKSAQWRVFGEFDICTVYLNEILQTRL</sequence>
<name>IRC19_ZYGRC</name>